<reference key="1">
    <citation type="journal article" date="2005" name="Science">
        <title>The genome of the basidiomycetous yeast and human pathogen Cryptococcus neoformans.</title>
        <authorList>
            <person name="Loftus B.J."/>
            <person name="Fung E."/>
            <person name="Roncaglia P."/>
            <person name="Rowley D."/>
            <person name="Amedeo P."/>
            <person name="Bruno D."/>
            <person name="Vamathevan J."/>
            <person name="Miranda M."/>
            <person name="Anderson I.J."/>
            <person name="Fraser J.A."/>
            <person name="Allen J.E."/>
            <person name="Bosdet I.E."/>
            <person name="Brent M.R."/>
            <person name="Chiu R."/>
            <person name="Doering T.L."/>
            <person name="Donlin M.J."/>
            <person name="D'Souza C.A."/>
            <person name="Fox D.S."/>
            <person name="Grinberg V."/>
            <person name="Fu J."/>
            <person name="Fukushima M."/>
            <person name="Haas B.J."/>
            <person name="Huang J.C."/>
            <person name="Janbon G."/>
            <person name="Jones S.J.M."/>
            <person name="Koo H.L."/>
            <person name="Krzywinski M.I."/>
            <person name="Kwon-Chung K.J."/>
            <person name="Lengeler K.B."/>
            <person name="Maiti R."/>
            <person name="Marra M.A."/>
            <person name="Marra R.E."/>
            <person name="Mathewson C.A."/>
            <person name="Mitchell T.G."/>
            <person name="Pertea M."/>
            <person name="Riggs F.R."/>
            <person name="Salzberg S.L."/>
            <person name="Schein J.E."/>
            <person name="Shvartsbeyn A."/>
            <person name="Shin H."/>
            <person name="Shumway M."/>
            <person name="Specht C.A."/>
            <person name="Suh B.B."/>
            <person name="Tenney A."/>
            <person name="Utterback T.R."/>
            <person name="Wickes B.L."/>
            <person name="Wortman J.R."/>
            <person name="Wye N.H."/>
            <person name="Kronstad J.W."/>
            <person name="Lodge J.K."/>
            <person name="Heitman J."/>
            <person name="Davis R.W."/>
            <person name="Fraser C.M."/>
            <person name="Hyman R.W."/>
        </authorList>
    </citation>
    <scope>NUCLEOTIDE SEQUENCE [LARGE SCALE GENOMIC DNA]</scope>
    <source>
        <strain>B-3501A</strain>
    </source>
</reference>
<accession>P0CP87</accession>
<accession>Q55SX4</accession>
<accession>Q5KHA8</accession>
<feature type="chain" id="PRO_0000410203" description="Peptidyl-prolyl cis-trans isomerase-like 3">
    <location>
        <begin position="1"/>
        <end position="167"/>
    </location>
</feature>
<feature type="domain" description="PPIase cyclophilin-type" evidence="2">
    <location>
        <begin position="1"/>
        <end position="153"/>
    </location>
</feature>
<comment type="function">
    <text evidence="1">PPIases accelerate the folding of proteins. It catalyzes the cis-trans isomerization of proline imidic peptide bonds in oligopeptides (By similarity).</text>
</comment>
<comment type="catalytic activity">
    <reaction>
        <text>[protein]-peptidylproline (omega=180) = [protein]-peptidylproline (omega=0)</text>
        <dbReference type="Rhea" id="RHEA:16237"/>
        <dbReference type="Rhea" id="RHEA-COMP:10747"/>
        <dbReference type="Rhea" id="RHEA-COMP:10748"/>
        <dbReference type="ChEBI" id="CHEBI:83833"/>
        <dbReference type="ChEBI" id="CHEBI:83834"/>
        <dbReference type="EC" id="5.2.1.8"/>
    </reaction>
</comment>
<comment type="similarity">
    <text evidence="3">Belongs to the cyclophilin-type PPIase family. PPIL3 subfamily.</text>
</comment>
<organism>
    <name type="scientific">Cryptococcus neoformans var. neoformans serotype D (strain B-3501A)</name>
    <name type="common">Filobasidiella neoformans</name>
    <dbReference type="NCBI Taxonomy" id="283643"/>
    <lineage>
        <taxon>Eukaryota</taxon>
        <taxon>Fungi</taxon>
        <taxon>Dikarya</taxon>
        <taxon>Basidiomycota</taxon>
        <taxon>Agaricomycotina</taxon>
        <taxon>Tremellomycetes</taxon>
        <taxon>Tremellales</taxon>
        <taxon>Cryptococcaceae</taxon>
        <taxon>Cryptococcus</taxon>
        <taxon>Cryptococcus neoformans species complex</taxon>
    </lineage>
</organism>
<protein>
    <recommendedName>
        <fullName>Peptidyl-prolyl cis-trans isomerase-like 3</fullName>
        <shortName>PPIase</shortName>
        <ecNumber>5.2.1.8</ecNumber>
    </recommendedName>
    <alternativeName>
        <fullName>Rotamase</fullName>
    </alternativeName>
</protein>
<name>PPIL3_CRYNB</name>
<keyword id="KW-0413">Isomerase</keyword>
<keyword id="KW-0697">Rotamase</keyword>
<sequence length="167" mass="18237">MSVTLHTNLGDIKIELFCESVPRTAENFLALCASGQYDGTLFHRNIRGFMIQGGDPTGTGKGGQSIWGRPFSDEIRQTLRFNNRGMVAMANAGPDTNKSQFFITYAKQPSLDGKYSIFGKVIDGMETLDSMEKTPVNPKSRPLQEIKLLNVTVHANPIADQAKGGLA</sequence>
<evidence type="ECO:0000250" key="1"/>
<evidence type="ECO:0000255" key="2">
    <source>
        <dbReference type="PROSITE-ProRule" id="PRU00156"/>
    </source>
</evidence>
<evidence type="ECO:0000305" key="3"/>
<proteinExistence type="inferred from homology"/>
<dbReference type="EC" id="5.2.1.8"/>
<dbReference type="EMBL" id="AAEY01000024">
    <property type="protein sequence ID" value="EAL20697.1"/>
    <property type="molecule type" value="Genomic_DNA"/>
</dbReference>
<dbReference type="RefSeq" id="XP_775344.1">
    <property type="nucleotide sequence ID" value="XM_770251.1"/>
</dbReference>
<dbReference type="SMR" id="P0CP87"/>
<dbReference type="EnsemblFungi" id="AAW43482">
    <property type="protein sequence ID" value="AAW43482"/>
    <property type="gene ID" value="CNE00680"/>
</dbReference>
<dbReference type="GeneID" id="4936067"/>
<dbReference type="KEGG" id="cnb:CNBE0620"/>
<dbReference type="VEuPathDB" id="FungiDB:CNBE0620"/>
<dbReference type="HOGENOM" id="CLU_012062_16_3_1"/>
<dbReference type="OrthoDB" id="3272at5206"/>
<dbReference type="GO" id="GO:0071013">
    <property type="term" value="C:catalytic step 2 spliceosome"/>
    <property type="evidence" value="ECO:0007669"/>
    <property type="project" value="TreeGrafter"/>
</dbReference>
<dbReference type="GO" id="GO:0003755">
    <property type="term" value="F:peptidyl-prolyl cis-trans isomerase activity"/>
    <property type="evidence" value="ECO:0007669"/>
    <property type="project" value="UniProtKB-KW"/>
</dbReference>
<dbReference type="GO" id="GO:0006457">
    <property type="term" value="P:protein folding"/>
    <property type="evidence" value="ECO:0007669"/>
    <property type="project" value="InterPro"/>
</dbReference>
<dbReference type="CDD" id="cd01928">
    <property type="entry name" value="Cyclophilin_PPIL3_like"/>
    <property type="match status" value="1"/>
</dbReference>
<dbReference type="FunFam" id="2.40.100.10:FF:000012">
    <property type="entry name" value="Peptidyl-prolyl cis-trans isomerase"/>
    <property type="match status" value="1"/>
</dbReference>
<dbReference type="Gene3D" id="2.40.100.10">
    <property type="entry name" value="Cyclophilin-like"/>
    <property type="match status" value="1"/>
</dbReference>
<dbReference type="InterPro" id="IPR029000">
    <property type="entry name" value="Cyclophilin-like_dom_sf"/>
</dbReference>
<dbReference type="InterPro" id="IPR024936">
    <property type="entry name" value="Cyclophilin-type_PPIase"/>
</dbReference>
<dbReference type="InterPro" id="IPR020892">
    <property type="entry name" value="Cyclophilin-type_PPIase_CS"/>
</dbReference>
<dbReference type="InterPro" id="IPR002130">
    <property type="entry name" value="Cyclophilin-type_PPIase_dom"/>
</dbReference>
<dbReference type="InterPro" id="IPR044666">
    <property type="entry name" value="Cyclophilin_A-like"/>
</dbReference>
<dbReference type="PANTHER" id="PTHR45625:SF2">
    <property type="entry name" value="PEPTIDYL-PROLYL CIS-TRANS ISOMERASE-LIKE 3"/>
    <property type="match status" value="1"/>
</dbReference>
<dbReference type="PANTHER" id="PTHR45625">
    <property type="entry name" value="PEPTIDYL-PROLYL CIS-TRANS ISOMERASE-RELATED"/>
    <property type="match status" value="1"/>
</dbReference>
<dbReference type="Pfam" id="PF00160">
    <property type="entry name" value="Pro_isomerase"/>
    <property type="match status" value="1"/>
</dbReference>
<dbReference type="PIRSF" id="PIRSF001467">
    <property type="entry name" value="Peptidylpro_ismrse"/>
    <property type="match status" value="1"/>
</dbReference>
<dbReference type="PRINTS" id="PR00153">
    <property type="entry name" value="CSAPPISMRASE"/>
</dbReference>
<dbReference type="SUPFAM" id="SSF50891">
    <property type="entry name" value="Cyclophilin-like"/>
    <property type="match status" value="1"/>
</dbReference>
<dbReference type="PROSITE" id="PS00170">
    <property type="entry name" value="CSA_PPIASE_1"/>
    <property type="match status" value="1"/>
</dbReference>
<dbReference type="PROSITE" id="PS50072">
    <property type="entry name" value="CSA_PPIASE_2"/>
    <property type="match status" value="1"/>
</dbReference>
<gene>
    <name type="primary">CYP10</name>
    <name type="ordered locus">CNBE0620</name>
</gene>